<comment type="subcellular location">
    <subcellularLocation>
        <location evidence="3">Secreted</location>
    </subcellularLocation>
</comment>
<comment type="similarity">
    <text evidence="3">Belongs to the 'GDSL' lipolytic enzyme family.</text>
</comment>
<comment type="sequence caution" evidence="3">
    <conflict type="erroneous initiation">
        <sequence resource="EMBL-CDS" id="AAM62801"/>
    </conflict>
</comment>
<sequence length="372" mass="41534">MRINMLFIVAFSFLVSVRSLPMRPTLKYESIFNFGDSLSDTGNFLLSGDVDSPNIGRLPYGQTFFNRSTGRCSDGRLIIDFIAEASGLPYIPPYLQSLRTNDSVDFKRGANFAVAGATANEFSFFKNRGLSVTLLTNKTLDIQLDWFKKLKPSLCKTKPECEQYFRKSLFLVGEIGGNDYNYPLLAFRSFKHAMDLVPFVINKIMDVTSALIEEGAMTLIVPGNLPIGCSAALLERFNDNSGWLYDSRNQCYMPLNNLAKLHNDKLKKGLAALRKKYPYAKIIYADYYSSAMQFFNSPSKYGFTGSVLKACCGGGDGRYNVQPNVRCGEKGSTTCEDPSTYANWDGIHLTEAAYRHIATGLISGRFTMPTYN</sequence>
<dbReference type="EC" id="3.1.1.-"/>
<dbReference type="EMBL" id="AB016870">
    <property type="protein sequence ID" value="BAB09319.1"/>
    <property type="molecule type" value="Genomic_DNA"/>
</dbReference>
<dbReference type="EMBL" id="CP002688">
    <property type="protein sequence ID" value="AED95314.1"/>
    <property type="molecule type" value="Genomic_DNA"/>
</dbReference>
<dbReference type="EMBL" id="AY085579">
    <property type="protein sequence ID" value="AAM62801.1"/>
    <property type="status" value="ALT_INIT"/>
    <property type="molecule type" value="mRNA"/>
</dbReference>
<dbReference type="RefSeq" id="NP_199403.1">
    <property type="nucleotide sequence ID" value="NM_123959.1"/>
</dbReference>
<dbReference type="SMR" id="Q9FJ45"/>
<dbReference type="FunCoup" id="Q9FJ45">
    <property type="interactions" value="109"/>
</dbReference>
<dbReference type="STRING" id="3702.Q9FJ45"/>
<dbReference type="GlyGen" id="Q9FJ45">
    <property type="glycosylation" value="3 sites"/>
</dbReference>
<dbReference type="PaxDb" id="3702-AT5G45910.1"/>
<dbReference type="ProteomicsDB" id="221993"/>
<dbReference type="EnsemblPlants" id="AT5G45910.1">
    <property type="protein sequence ID" value="AT5G45910.1"/>
    <property type="gene ID" value="AT5G45910"/>
</dbReference>
<dbReference type="GeneID" id="834631"/>
<dbReference type="Gramene" id="AT5G45910.1">
    <property type="protein sequence ID" value="AT5G45910.1"/>
    <property type="gene ID" value="AT5G45910"/>
</dbReference>
<dbReference type="KEGG" id="ath:AT5G45910"/>
<dbReference type="Araport" id="AT5G45910"/>
<dbReference type="TAIR" id="AT5G45910"/>
<dbReference type="eggNOG" id="ENOG502QU5U">
    <property type="taxonomic scope" value="Eukaryota"/>
</dbReference>
<dbReference type="HOGENOM" id="CLU_015101_2_1_1"/>
<dbReference type="InParanoid" id="Q9FJ45"/>
<dbReference type="OMA" id="KTKPECE"/>
<dbReference type="PhylomeDB" id="Q9FJ45"/>
<dbReference type="BioCyc" id="ARA:AT5G45910-MONOMER"/>
<dbReference type="PRO" id="PR:Q9FJ45"/>
<dbReference type="Proteomes" id="UP000006548">
    <property type="component" value="Chromosome 5"/>
</dbReference>
<dbReference type="ExpressionAtlas" id="Q9FJ45">
    <property type="expression patterns" value="baseline and differential"/>
</dbReference>
<dbReference type="GO" id="GO:0005576">
    <property type="term" value="C:extracellular region"/>
    <property type="evidence" value="ECO:0007669"/>
    <property type="project" value="UniProtKB-SubCell"/>
</dbReference>
<dbReference type="GO" id="GO:0016788">
    <property type="term" value="F:hydrolase activity, acting on ester bonds"/>
    <property type="evidence" value="ECO:0007669"/>
    <property type="project" value="InterPro"/>
</dbReference>
<dbReference type="GO" id="GO:0016042">
    <property type="term" value="P:lipid catabolic process"/>
    <property type="evidence" value="ECO:0007669"/>
    <property type="project" value="UniProtKB-KW"/>
</dbReference>
<dbReference type="CDD" id="cd01837">
    <property type="entry name" value="SGNH_plant_lipase_like"/>
    <property type="match status" value="1"/>
</dbReference>
<dbReference type="Gene3D" id="3.40.50.1110">
    <property type="entry name" value="SGNH hydrolase"/>
    <property type="match status" value="1"/>
</dbReference>
<dbReference type="InterPro" id="IPR001087">
    <property type="entry name" value="GDSL"/>
</dbReference>
<dbReference type="InterPro" id="IPR036514">
    <property type="entry name" value="SGNH_hydro_sf"/>
</dbReference>
<dbReference type="InterPro" id="IPR035669">
    <property type="entry name" value="SGNH_plant_lipase-like"/>
</dbReference>
<dbReference type="PANTHER" id="PTHR22835:SF659">
    <property type="entry name" value="GDSL LIPASE_ACYLHYDROLASE, PUTATIVE (AFU_ORTHOLOGUE AFUA_2G00510)-RELATED"/>
    <property type="match status" value="1"/>
</dbReference>
<dbReference type="PANTHER" id="PTHR22835">
    <property type="entry name" value="ZINC FINGER FYVE DOMAIN CONTAINING PROTEIN"/>
    <property type="match status" value="1"/>
</dbReference>
<dbReference type="Pfam" id="PF00657">
    <property type="entry name" value="Lipase_GDSL"/>
    <property type="match status" value="1"/>
</dbReference>
<accession>Q9FJ45</accession>
<accession>Q8LE77</accession>
<name>GDL83_ARATH</name>
<proteinExistence type="evidence at transcript level"/>
<organism>
    <name type="scientific">Arabidopsis thaliana</name>
    <name type="common">Mouse-ear cress</name>
    <dbReference type="NCBI Taxonomy" id="3702"/>
    <lineage>
        <taxon>Eukaryota</taxon>
        <taxon>Viridiplantae</taxon>
        <taxon>Streptophyta</taxon>
        <taxon>Embryophyta</taxon>
        <taxon>Tracheophyta</taxon>
        <taxon>Spermatophyta</taxon>
        <taxon>Magnoliopsida</taxon>
        <taxon>eudicotyledons</taxon>
        <taxon>Gunneridae</taxon>
        <taxon>Pentapetalae</taxon>
        <taxon>rosids</taxon>
        <taxon>malvids</taxon>
        <taxon>Brassicales</taxon>
        <taxon>Brassicaceae</taxon>
        <taxon>Camelineae</taxon>
        <taxon>Arabidopsis</taxon>
    </lineage>
</organism>
<keyword id="KW-0325">Glycoprotein</keyword>
<keyword id="KW-0378">Hydrolase</keyword>
<keyword id="KW-0442">Lipid degradation</keyword>
<keyword id="KW-0443">Lipid metabolism</keyword>
<keyword id="KW-1185">Reference proteome</keyword>
<keyword id="KW-0964">Secreted</keyword>
<keyword id="KW-0732">Signal</keyword>
<feature type="signal peptide" evidence="2">
    <location>
        <begin position="1"/>
        <end position="19"/>
    </location>
</feature>
<feature type="chain" id="PRO_0000367423" description="GDSL esterase/lipase At5g45910">
    <location>
        <begin position="20"/>
        <end position="372"/>
    </location>
</feature>
<feature type="active site" description="Nucleophile" evidence="1">
    <location>
        <position position="37"/>
    </location>
</feature>
<feature type="active site" evidence="1">
    <location>
        <position position="345"/>
    </location>
</feature>
<feature type="active site" evidence="1">
    <location>
        <position position="348"/>
    </location>
</feature>
<feature type="glycosylation site" description="N-linked (GlcNAc...) asparagine" evidence="2">
    <location>
        <position position="66"/>
    </location>
</feature>
<feature type="glycosylation site" description="N-linked (GlcNAc...) asparagine" evidence="2">
    <location>
        <position position="101"/>
    </location>
</feature>
<feature type="glycosylation site" description="N-linked (GlcNAc...) asparagine" evidence="2">
    <location>
        <position position="137"/>
    </location>
</feature>
<feature type="sequence conflict" description="In Ref. 3; AAM62801." evidence="3" ref="3">
    <original>Q</original>
    <variation>R</variation>
    <location>
        <position position="163"/>
    </location>
</feature>
<feature type="sequence conflict" description="In Ref. 3; AAM62801." evidence="3" ref="3">
    <original>G</original>
    <variation>S</variation>
    <location>
        <position position="176"/>
    </location>
</feature>
<gene>
    <name type="ordered locus">At5g45910</name>
    <name type="ORF">K15I22.11</name>
</gene>
<protein>
    <recommendedName>
        <fullName>GDSL esterase/lipase At5g45910</fullName>
        <ecNumber>3.1.1.-</ecNumber>
    </recommendedName>
    <alternativeName>
        <fullName>Extracellular lipase At5g45910</fullName>
    </alternativeName>
</protein>
<evidence type="ECO:0000250" key="1"/>
<evidence type="ECO:0000255" key="2"/>
<evidence type="ECO:0000305" key="3"/>
<reference key="1">
    <citation type="journal article" date="1998" name="DNA Res.">
        <title>Structural analysis of Arabidopsis thaliana chromosome 5. VIII. Sequence features of the regions of 1,081,958 bp covered by seventeen physically assigned P1 and TAC clones.</title>
        <authorList>
            <person name="Asamizu E."/>
            <person name="Sato S."/>
            <person name="Kaneko T."/>
            <person name="Nakamura Y."/>
            <person name="Kotani H."/>
            <person name="Miyajima N."/>
            <person name="Tabata S."/>
        </authorList>
    </citation>
    <scope>NUCLEOTIDE SEQUENCE [LARGE SCALE GENOMIC DNA]</scope>
    <source>
        <strain>cv. Columbia</strain>
    </source>
</reference>
<reference key="2">
    <citation type="journal article" date="2017" name="Plant J.">
        <title>Araport11: a complete reannotation of the Arabidopsis thaliana reference genome.</title>
        <authorList>
            <person name="Cheng C.Y."/>
            <person name="Krishnakumar V."/>
            <person name="Chan A.P."/>
            <person name="Thibaud-Nissen F."/>
            <person name="Schobel S."/>
            <person name="Town C.D."/>
        </authorList>
    </citation>
    <scope>GENOME REANNOTATION</scope>
    <source>
        <strain>cv. Columbia</strain>
    </source>
</reference>
<reference key="3">
    <citation type="submission" date="2002-03" db="EMBL/GenBank/DDBJ databases">
        <title>Full-length cDNA from Arabidopsis thaliana.</title>
        <authorList>
            <person name="Brover V.V."/>
            <person name="Troukhan M.E."/>
            <person name="Alexandrov N.A."/>
            <person name="Lu Y.-P."/>
            <person name="Flavell R.B."/>
            <person name="Feldmann K.A."/>
        </authorList>
    </citation>
    <scope>NUCLEOTIDE SEQUENCE [LARGE SCALE MRNA]</scope>
</reference>
<reference key="4">
    <citation type="journal article" date="2004" name="Prog. Lipid Res.">
        <title>GDSL family of serine esterases/lipases.</title>
        <authorList>
            <person name="Akoh C.C."/>
            <person name="Lee G.-C."/>
            <person name="Liaw Y.-C."/>
            <person name="Huang T.-H."/>
            <person name="Shaw J.-F."/>
        </authorList>
    </citation>
    <scope>REVIEW</scope>
</reference>
<reference key="5">
    <citation type="journal article" date="2008" name="Pak. J. Biol. Sci.">
        <title>Sequence analysis of GDSL lipase gene family in Arabidopsis thaliana.</title>
        <authorList>
            <person name="Ling H."/>
        </authorList>
    </citation>
    <scope>GENE FAMILY</scope>
</reference>